<evidence type="ECO:0000255" key="1">
    <source>
        <dbReference type="HAMAP-Rule" id="MF_00605"/>
    </source>
</evidence>
<keyword id="KW-0963">Cytoplasm</keyword>
<keyword id="KW-0489">Methyltransferase</keyword>
<keyword id="KW-1185">Reference proteome</keyword>
<keyword id="KW-0949">S-adenosyl-L-methionine</keyword>
<keyword id="KW-0808">Transferase</keyword>
<keyword id="KW-0819">tRNA processing</keyword>
<accession>Q73PB5</accession>
<protein>
    <recommendedName>
        <fullName evidence="1">tRNA (guanine-N(1)-)-methyltransferase</fullName>
        <ecNumber evidence="1">2.1.1.228</ecNumber>
    </recommendedName>
    <alternativeName>
        <fullName evidence="1">M1G-methyltransferase</fullName>
    </alternativeName>
    <alternativeName>
        <fullName evidence="1">tRNA [GM37] methyltransferase</fullName>
    </alternativeName>
</protein>
<gene>
    <name evidence="1" type="primary">trmD</name>
    <name type="ordered locus">TDE_0884</name>
</gene>
<sequence>MRFDVLTLFPEIPEAFFKTSIMAKAVEKGIISCNLVNIRDFAFDKHRSCDDIVYGGGAGMLLLPEPLSLALDSVNASSKRVIYVTPSGKPFNQELAKEFSSEEALVFVCGRYEGIDQRIIDEYVDDEISVGDYVMSSGELAALVIIDAVYRLIDGVISGESLEEESFSGFLLEYPQYTRPRNFKGKEVPEVLLSGHHLNIHKWRLKKRIEKTLKTRPDLIEKARNCGMWTKEAEKILKEFENE</sequence>
<proteinExistence type="inferred from homology"/>
<reference key="1">
    <citation type="journal article" date="2004" name="Proc. Natl. Acad. Sci. U.S.A.">
        <title>Comparison of the genome of the oral pathogen Treponema denticola with other spirochete genomes.</title>
        <authorList>
            <person name="Seshadri R."/>
            <person name="Myers G.S.A."/>
            <person name="Tettelin H."/>
            <person name="Eisen J.A."/>
            <person name="Heidelberg J.F."/>
            <person name="Dodson R.J."/>
            <person name="Davidsen T.M."/>
            <person name="DeBoy R.T."/>
            <person name="Fouts D.E."/>
            <person name="Haft D.H."/>
            <person name="Selengut J."/>
            <person name="Ren Q."/>
            <person name="Brinkac L.M."/>
            <person name="Madupu R."/>
            <person name="Kolonay J.F."/>
            <person name="Durkin S.A."/>
            <person name="Daugherty S.C."/>
            <person name="Shetty J."/>
            <person name="Shvartsbeyn A."/>
            <person name="Gebregeorgis E."/>
            <person name="Geer K."/>
            <person name="Tsegaye G."/>
            <person name="Malek J.A."/>
            <person name="Ayodeji B."/>
            <person name="Shatsman S."/>
            <person name="McLeod M.P."/>
            <person name="Smajs D."/>
            <person name="Howell J.K."/>
            <person name="Pal S."/>
            <person name="Amin A."/>
            <person name="Vashisth P."/>
            <person name="McNeill T.Z."/>
            <person name="Xiang Q."/>
            <person name="Sodergren E."/>
            <person name="Baca E."/>
            <person name="Weinstock G.M."/>
            <person name="Norris S.J."/>
            <person name="Fraser C.M."/>
            <person name="Paulsen I.T."/>
        </authorList>
    </citation>
    <scope>NUCLEOTIDE SEQUENCE [LARGE SCALE GENOMIC DNA]</scope>
    <source>
        <strain>ATCC 35405 / DSM 14222 / CIP 103919 / JCM 8153 / KCTC 15104</strain>
    </source>
</reference>
<name>TRMD_TREDE</name>
<comment type="function">
    <text evidence="1">Specifically methylates guanosine-37 in various tRNAs.</text>
</comment>
<comment type="catalytic activity">
    <reaction evidence="1">
        <text>guanosine(37) in tRNA + S-adenosyl-L-methionine = N(1)-methylguanosine(37) in tRNA + S-adenosyl-L-homocysteine + H(+)</text>
        <dbReference type="Rhea" id="RHEA:36899"/>
        <dbReference type="Rhea" id="RHEA-COMP:10145"/>
        <dbReference type="Rhea" id="RHEA-COMP:10147"/>
        <dbReference type="ChEBI" id="CHEBI:15378"/>
        <dbReference type="ChEBI" id="CHEBI:57856"/>
        <dbReference type="ChEBI" id="CHEBI:59789"/>
        <dbReference type="ChEBI" id="CHEBI:73542"/>
        <dbReference type="ChEBI" id="CHEBI:74269"/>
        <dbReference type="EC" id="2.1.1.228"/>
    </reaction>
</comment>
<comment type="subunit">
    <text evidence="1">Homodimer.</text>
</comment>
<comment type="subcellular location">
    <subcellularLocation>
        <location evidence="1">Cytoplasm</location>
    </subcellularLocation>
</comment>
<comment type="similarity">
    <text evidence="1">Belongs to the RNA methyltransferase TrmD family.</text>
</comment>
<feature type="chain" id="PRO_0000060487" description="tRNA (guanine-N(1)-)-methyltransferase">
    <location>
        <begin position="1"/>
        <end position="243"/>
    </location>
</feature>
<feature type="binding site" evidence="1">
    <location>
        <position position="110"/>
    </location>
    <ligand>
        <name>S-adenosyl-L-methionine</name>
        <dbReference type="ChEBI" id="CHEBI:59789"/>
    </ligand>
</feature>
<feature type="binding site" evidence="1">
    <location>
        <begin position="130"/>
        <end position="135"/>
    </location>
    <ligand>
        <name>S-adenosyl-L-methionine</name>
        <dbReference type="ChEBI" id="CHEBI:59789"/>
    </ligand>
</feature>
<organism>
    <name type="scientific">Treponema denticola (strain ATCC 35405 / DSM 14222 / CIP 103919 / JCM 8153 / KCTC 15104)</name>
    <dbReference type="NCBI Taxonomy" id="243275"/>
    <lineage>
        <taxon>Bacteria</taxon>
        <taxon>Pseudomonadati</taxon>
        <taxon>Spirochaetota</taxon>
        <taxon>Spirochaetia</taxon>
        <taxon>Spirochaetales</taxon>
        <taxon>Treponemataceae</taxon>
        <taxon>Treponema</taxon>
    </lineage>
</organism>
<dbReference type="EC" id="2.1.1.228" evidence="1"/>
<dbReference type="EMBL" id="AE017226">
    <property type="protein sequence ID" value="AAS11375.1"/>
    <property type="molecule type" value="Genomic_DNA"/>
</dbReference>
<dbReference type="RefSeq" id="NP_971494.1">
    <property type="nucleotide sequence ID" value="NC_002967.9"/>
</dbReference>
<dbReference type="RefSeq" id="WP_002670221.1">
    <property type="nucleotide sequence ID" value="NC_002967.9"/>
</dbReference>
<dbReference type="SMR" id="Q73PB5"/>
<dbReference type="STRING" id="243275.TDE_0884"/>
<dbReference type="PaxDb" id="243275-TDE_0884"/>
<dbReference type="GeneID" id="2739758"/>
<dbReference type="KEGG" id="tde:TDE_0884"/>
<dbReference type="PATRIC" id="fig|243275.7.peg.854"/>
<dbReference type="eggNOG" id="COG0336">
    <property type="taxonomic scope" value="Bacteria"/>
</dbReference>
<dbReference type="HOGENOM" id="CLU_047363_0_1_12"/>
<dbReference type="OrthoDB" id="9807416at2"/>
<dbReference type="Proteomes" id="UP000008212">
    <property type="component" value="Chromosome"/>
</dbReference>
<dbReference type="GO" id="GO:0005829">
    <property type="term" value="C:cytosol"/>
    <property type="evidence" value="ECO:0007669"/>
    <property type="project" value="TreeGrafter"/>
</dbReference>
<dbReference type="GO" id="GO:0052906">
    <property type="term" value="F:tRNA (guanine(37)-N1)-methyltransferase activity"/>
    <property type="evidence" value="ECO:0007669"/>
    <property type="project" value="UniProtKB-UniRule"/>
</dbReference>
<dbReference type="GO" id="GO:0002939">
    <property type="term" value="P:tRNA N1-guanine methylation"/>
    <property type="evidence" value="ECO:0007669"/>
    <property type="project" value="TreeGrafter"/>
</dbReference>
<dbReference type="CDD" id="cd18080">
    <property type="entry name" value="TrmD-like"/>
    <property type="match status" value="1"/>
</dbReference>
<dbReference type="FunFam" id="1.10.1270.20:FF:000001">
    <property type="entry name" value="tRNA (guanine-N(1)-)-methyltransferase"/>
    <property type="match status" value="1"/>
</dbReference>
<dbReference type="FunFam" id="3.40.1280.10:FF:000001">
    <property type="entry name" value="tRNA (guanine-N(1)-)-methyltransferase"/>
    <property type="match status" value="1"/>
</dbReference>
<dbReference type="Gene3D" id="3.40.1280.10">
    <property type="match status" value="1"/>
</dbReference>
<dbReference type="Gene3D" id="1.10.1270.20">
    <property type="entry name" value="tRNA(m1g37)methyltransferase, domain 2"/>
    <property type="match status" value="1"/>
</dbReference>
<dbReference type="HAMAP" id="MF_00605">
    <property type="entry name" value="TrmD"/>
    <property type="match status" value="1"/>
</dbReference>
<dbReference type="InterPro" id="IPR029028">
    <property type="entry name" value="Alpha/beta_knot_MTases"/>
</dbReference>
<dbReference type="InterPro" id="IPR023148">
    <property type="entry name" value="tRNA_m1G_MeTrfase_C_sf"/>
</dbReference>
<dbReference type="InterPro" id="IPR002649">
    <property type="entry name" value="tRNA_m1G_MeTrfase_TrmD"/>
</dbReference>
<dbReference type="InterPro" id="IPR029026">
    <property type="entry name" value="tRNA_m1G_MTases_N"/>
</dbReference>
<dbReference type="InterPro" id="IPR016009">
    <property type="entry name" value="tRNA_MeTrfase_TRMD/TRM10"/>
</dbReference>
<dbReference type="NCBIfam" id="NF000648">
    <property type="entry name" value="PRK00026.1"/>
    <property type="match status" value="1"/>
</dbReference>
<dbReference type="NCBIfam" id="TIGR00088">
    <property type="entry name" value="trmD"/>
    <property type="match status" value="1"/>
</dbReference>
<dbReference type="PANTHER" id="PTHR46417">
    <property type="entry name" value="TRNA (GUANINE-N(1)-)-METHYLTRANSFERASE"/>
    <property type="match status" value="1"/>
</dbReference>
<dbReference type="PANTHER" id="PTHR46417:SF1">
    <property type="entry name" value="TRNA (GUANINE-N(1)-)-METHYLTRANSFERASE"/>
    <property type="match status" value="1"/>
</dbReference>
<dbReference type="Pfam" id="PF01746">
    <property type="entry name" value="tRNA_m1G_MT"/>
    <property type="match status" value="1"/>
</dbReference>
<dbReference type="PIRSF" id="PIRSF000386">
    <property type="entry name" value="tRNA_mtase"/>
    <property type="match status" value="1"/>
</dbReference>
<dbReference type="SUPFAM" id="SSF75217">
    <property type="entry name" value="alpha/beta knot"/>
    <property type="match status" value="1"/>
</dbReference>